<proteinExistence type="inferred from homology"/>
<protein>
    <recommendedName>
        <fullName evidence="1">DNA-directed RNA polymerase subunit beta'</fullName>
        <shortName evidence="1">RNAP subunit beta'</shortName>
        <ecNumber evidence="1">2.7.7.6</ecNumber>
    </recommendedName>
    <alternativeName>
        <fullName evidence="1">RNA polymerase subunit beta'</fullName>
    </alternativeName>
    <alternativeName>
        <fullName evidence="1">Transcriptase subunit beta'</fullName>
    </alternativeName>
</protein>
<accession>B3EER3</accession>
<sequence>MIFSQGASPLKGDFSRIKFSIASPESILAHSRGEVLKPETINYRTFKPERDGLMCEKIFGPTKDWECYCGKYKRVRYKGIICDRCGVEVTTKSVRRERMGHISLAVPVVHTWFFRSVPSKIGALLDLSTKELERIIYYEVYVVINPGEPGEKQGIKKLDRLTEEQYFQIITEYEDNQDLDDTDSAKFVAKMGGEAIHMLLKSIDLNETAVTLRKVLRESSSEQKRADALKRLKVVESFRKSYEPQKKTRKKPGGLFPEDEIPEPYVYEGNKPEYMVMEVVPVIPPELRPLVPLEGGRFATSDLNDLYRRVIIRNNRLKKLIDIRAPEVILRNEKRMLQEAVDALFDNSRKANAVKTGESNRPLKSLSDALKGKQGRFRQNLLGKRVDYSGRSVIVVGPELKLHECGLPKSMAIELFQPFVIRRLVERGIAKSVKSAKKLIDKKDPIVWDVLEKVIDGRPVLLNRAPTLHRLGIQAFQPVLIEGKAIQIHPLVCTAFNADFDGDQMAVHVPLSQEAQLEASLLMLSSHNLILPQSGKPVTVPSQDMVLGMYYLTKSRSGEEGEGRIFYDSEDVLIAYNEQRVGLHAQIFVCFNGLVDQKFDPLRVLETVIDEKSEKYGWLRSQLEQKKMLLTTVGRVIFNQHVPESIGFINRVIDKKVAKELIGRLSSEVGNVETAKFLDNIKEVGFHYAMKGGLSVGLSDAIVPETKVRHIKSAQKDSTKVVKEYNRGTLTDNERYNQIVDVWQKTSNIVAEESYQKLKKDRDGFNPLYMMLDSGARGSREQVRQLTGMRGLIARPQKSMSGQPGEIIENPIISNLKEGLTVLEYFISTHGARKGLSDTSLKTADAGYLTRRLHDVAQDVIVTIDDCGTTRGLHVYRNIEEETSGQIKFREKIRGRVAARDIYDTLNNNVVVKAGEIITDELADLVQDTAGVEEAEIRSVLTCESKVGICSKCYGTNLSVHKLVEIGEAVGVIAAQSIGEPGTQLTLRTFHQGGTAQGGISETETKAFNEGVLEFEDVKTVEHSSINEDGVEDLRTIVIQKNGKINIVDPESGKVLKRYVIPHGAHLHCRPGNAVKKDQVLFSSEPNSTQIIAETPGSVRFADIEKGVTYKEEVDPQTGFAQHTIINWRSKLRANETREPRIMIIDASGEIRKTYPVPIKSNLYVEDGQKVLPGDIIAKVPRNLDRVGGDITAGLPKVTELFEARIPSDPAIVSEIDGYVSFGSQRRSSKEIKVKNDFGEEKIYYVQVGKHVLANEGDEVKAGDPMTDGAVSPQDILRIQGPNAVQQYLVNEIQKVYQINAGVEINDKHLEVIVRQMLQKVRVEEPGDTELLPGDLIDRSAFIEANENIAEKVRVTDKGDAPARIQDGQLCKMRDIAKLNRELRKNSKKLVVIEPTLQATSHPVLLGITSAALQTESVISAASFQETTKVLTDAAVAGKIDNLLGLKENVIVGKLIPAGTGLKRYRTIRLTGDTQKQAAVAEAVAAPDKEIEGHGI</sequence>
<dbReference type="EC" id="2.7.7.6" evidence="1"/>
<dbReference type="EMBL" id="CP001097">
    <property type="protein sequence ID" value="ACD89296.1"/>
    <property type="molecule type" value="Genomic_DNA"/>
</dbReference>
<dbReference type="RefSeq" id="WP_012465177.1">
    <property type="nucleotide sequence ID" value="NC_010803.1"/>
</dbReference>
<dbReference type="SMR" id="B3EER3"/>
<dbReference type="STRING" id="290315.Clim_0197"/>
<dbReference type="KEGG" id="cli:Clim_0197"/>
<dbReference type="eggNOG" id="COG0086">
    <property type="taxonomic scope" value="Bacteria"/>
</dbReference>
<dbReference type="HOGENOM" id="CLU_000524_3_1_10"/>
<dbReference type="OrthoDB" id="9815296at2"/>
<dbReference type="Proteomes" id="UP000008841">
    <property type="component" value="Chromosome"/>
</dbReference>
<dbReference type="GO" id="GO:0000428">
    <property type="term" value="C:DNA-directed RNA polymerase complex"/>
    <property type="evidence" value="ECO:0007669"/>
    <property type="project" value="UniProtKB-KW"/>
</dbReference>
<dbReference type="GO" id="GO:0003677">
    <property type="term" value="F:DNA binding"/>
    <property type="evidence" value="ECO:0007669"/>
    <property type="project" value="UniProtKB-UniRule"/>
</dbReference>
<dbReference type="GO" id="GO:0003899">
    <property type="term" value="F:DNA-directed RNA polymerase activity"/>
    <property type="evidence" value="ECO:0007669"/>
    <property type="project" value="UniProtKB-UniRule"/>
</dbReference>
<dbReference type="GO" id="GO:0000287">
    <property type="term" value="F:magnesium ion binding"/>
    <property type="evidence" value="ECO:0007669"/>
    <property type="project" value="UniProtKB-UniRule"/>
</dbReference>
<dbReference type="GO" id="GO:0008270">
    <property type="term" value="F:zinc ion binding"/>
    <property type="evidence" value="ECO:0007669"/>
    <property type="project" value="UniProtKB-UniRule"/>
</dbReference>
<dbReference type="GO" id="GO:0006351">
    <property type="term" value="P:DNA-templated transcription"/>
    <property type="evidence" value="ECO:0007669"/>
    <property type="project" value="UniProtKB-UniRule"/>
</dbReference>
<dbReference type="CDD" id="cd02655">
    <property type="entry name" value="RNAP_beta'_C"/>
    <property type="match status" value="1"/>
</dbReference>
<dbReference type="CDD" id="cd01609">
    <property type="entry name" value="RNAP_beta'_N"/>
    <property type="match status" value="1"/>
</dbReference>
<dbReference type="FunFam" id="1.10.150.390:FF:000002">
    <property type="entry name" value="DNA-directed RNA polymerase subunit beta"/>
    <property type="match status" value="1"/>
</dbReference>
<dbReference type="Gene3D" id="1.10.132.30">
    <property type="match status" value="1"/>
</dbReference>
<dbReference type="Gene3D" id="1.10.150.390">
    <property type="match status" value="1"/>
</dbReference>
<dbReference type="Gene3D" id="1.10.1790.20">
    <property type="match status" value="1"/>
</dbReference>
<dbReference type="Gene3D" id="1.10.40.90">
    <property type="match status" value="1"/>
</dbReference>
<dbReference type="Gene3D" id="2.40.40.20">
    <property type="match status" value="1"/>
</dbReference>
<dbReference type="Gene3D" id="2.40.50.100">
    <property type="match status" value="3"/>
</dbReference>
<dbReference type="Gene3D" id="4.10.860.120">
    <property type="entry name" value="RNA polymerase II, clamp domain"/>
    <property type="match status" value="1"/>
</dbReference>
<dbReference type="Gene3D" id="1.10.274.100">
    <property type="entry name" value="RNA polymerase Rpb1, domain 3"/>
    <property type="match status" value="1"/>
</dbReference>
<dbReference type="HAMAP" id="MF_01322">
    <property type="entry name" value="RNApol_bact_RpoC"/>
    <property type="match status" value="1"/>
</dbReference>
<dbReference type="InterPro" id="IPR045867">
    <property type="entry name" value="DNA-dir_RpoC_beta_prime"/>
</dbReference>
<dbReference type="InterPro" id="IPR012754">
    <property type="entry name" value="DNA-dir_RpoC_beta_prime_bact"/>
</dbReference>
<dbReference type="InterPro" id="IPR000722">
    <property type="entry name" value="RNA_pol_asu"/>
</dbReference>
<dbReference type="InterPro" id="IPR006592">
    <property type="entry name" value="RNA_pol_N"/>
</dbReference>
<dbReference type="InterPro" id="IPR007080">
    <property type="entry name" value="RNA_pol_Rpb1_1"/>
</dbReference>
<dbReference type="InterPro" id="IPR007066">
    <property type="entry name" value="RNA_pol_Rpb1_3"/>
</dbReference>
<dbReference type="InterPro" id="IPR042102">
    <property type="entry name" value="RNA_pol_Rpb1_3_sf"/>
</dbReference>
<dbReference type="InterPro" id="IPR007083">
    <property type="entry name" value="RNA_pol_Rpb1_4"/>
</dbReference>
<dbReference type="InterPro" id="IPR007081">
    <property type="entry name" value="RNA_pol_Rpb1_5"/>
</dbReference>
<dbReference type="InterPro" id="IPR044893">
    <property type="entry name" value="RNA_pol_Rpb1_clamp_domain"/>
</dbReference>
<dbReference type="InterPro" id="IPR038120">
    <property type="entry name" value="Rpb1_funnel_sf"/>
</dbReference>
<dbReference type="NCBIfam" id="TIGR02386">
    <property type="entry name" value="rpoC_TIGR"/>
    <property type="match status" value="1"/>
</dbReference>
<dbReference type="PANTHER" id="PTHR19376">
    <property type="entry name" value="DNA-DIRECTED RNA POLYMERASE"/>
    <property type="match status" value="1"/>
</dbReference>
<dbReference type="PANTHER" id="PTHR19376:SF54">
    <property type="entry name" value="DNA-DIRECTED RNA POLYMERASE SUBUNIT BETA"/>
    <property type="match status" value="1"/>
</dbReference>
<dbReference type="Pfam" id="PF04997">
    <property type="entry name" value="RNA_pol_Rpb1_1"/>
    <property type="match status" value="1"/>
</dbReference>
<dbReference type="Pfam" id="PF00623">
    <property type="entry name" value="RNA_pol_Rpb1_2"/>
    <property type="match status" value="2"/>
</dbReference>
<dbReference type="Pfam" id="PF04983">
    <property type="entry name" value="RNA_pol_Rpb1_3"/>
    <property type="match status" value="1"/>
</dbReference>
<dbReference type="Pfam" id="PF05000">
    <property type="entry name" value="RNA_pol_Rpb1_4"/>
    <property type="match status" value="1"/>
</dbReference>
<dbReference type="Pfam" id="PF04998">
    <property type="entry name" value="RNA_pol_Rpb1_5"/>
    <property type="match status" value="1"/>
</dbReference>
<dbReference type="SMART" id="SM00663">
    <property type="entry name" value="RPOLA_N"/>
    <property type="match status" value="1"/>
</dbReference>
<dbReference type="SUPFAM" id="SSF64484">
    <property type="entry name" value="beta and beta-prime subunits of DNA dependent RNA-polymerase"/>
    <property type="match status" value="1"/>
</dbReference>
<reference key="1">
    <citation type="submission" date="2008-05" db="EMBL/GenBank/DDBJ databases">
        <title>Complete sequence of Chlorobium limicola DSM 245.</title>
        <authorList>
            <consortium name="US DOE Joint Genome Institute"/>
            <person name="Lucas S."/>
            <person name="Copeland A."/>
            <person name="Lapidus A."/>
            <person name="Glavina del Rio T."/>
            <person name="Dalin E."/>
            <person name="Tice H."/>
            <person name="Bruce D."/>
            <person name="Goodwin L."/>
            <person name="Pitluck S."/>
            <person name="Schmutz J."/>
            <person name="Larimer F."/>
            <person name="Land M."/>
            <person name="Hauser L."/>
            <person name="Kyrpides N."/>
            <person name="Ovchinnikova G."/>
            <person name="Zhao F."/>
            <person name="Li T."/>
            <person name="Liu Z."/>
            <person name="Overmann J."/>
            <person name="Bryant D.A."/>
            <person name="Richardson P."/>
        </authorList>
    </citation>
    <scope>NUCLEOTIDE SEQUENCE [LARGE SCALE GENOMIC DNA]</scope>
    <source>
        <strain>DSM 245 / NBRC 103803 / 6330</strain>
    </source>
</reference>
<feature type="chain" id="PRO_0000353323" description="DNA-directed RNA polymerase subunit beta'">
    <location>
        <begin position="1"/>
        <end position="1496"/>
    </location>
</feature>
<feature type="binding site" evidence="1">
    <location>
        <position position="67"/>
    </location>
    <ligand>
        <name>Zn(2+)</name>
        <dbReference type="ChEBI" id="CHEBI:29105"/>
        <label>1</label>
    </ligand>
</feature>
<feature type="binding site" evidence="1">
    <location>
        <position position="69"/>
    </location>
    <ligand>
        <name>Zn(2+)</name>
        <dbReference type="ChEBI" id="CHEBI:29105"/>
        <label>1</label>
    </ligand>
</feature>
<feature type="binding site" evidence="1">
    <location>
        <position position="82"/>
    </location>
    <ligand>
        <name>Zn(2+)</name>
        <dbReference type="ChEBI" id="CHEBI:29105"/>
        <label>1</label>
    </ligand>
</feature>
<feature type="binding site" evidence="1">
    <location>
        <position position="85"/>
    </location>
    <ligand>
        <name>Zn(2+)</name>
        <dbReference type="ChEBI" id="CHEBI:29105"/>
        <label>1</label>
    </ligand>
</feature>
<feature type="binding site" evidence="1">
    <location>
        <position position="499"/>
    </location>
    <ligand>
        <name>Mg(2+)</name>
        <dbReference type="ChEBI" id="CHEBI:18420"/>
    </ligand>
</feature>
<feature type="binding site" evidence="1">
    <location>
        <position position="501"/>
    </location>
    <ligand>
        <name>Mg(2+)</name>
        <dbReference type="ChEBI" id="CHEBI:18420"/>
    </ligand>
</feature>
<feature type="binding site" evidence="1">
    <location>
        <position position="503"/>
    </location>
    <ligand>
        <name>Mg(2+)</name>
        <dbReference type="ChEBI" id="CHEBI:18420"/>
    </ligand>
</feature>
<feature type="binding site" evidence="1">
    <location>
        <position position="867"/>
    </location>
    <ligand>
        <name>Zn(2+)</name>
        <dbReference type="ChEBI" id="CHEBI:29105"/>
        <label>2</label>
    </ligand>
</feature>
<feature type="binding site" evidence="1">
    <location>
        <position position="943"/>
    </location>
    <ligand>
        <name>Zn(2+)</name>
        <dbReference type="ChEBI" id="CHEBI:29105"/>
        <label>2</label>
    </ligand>
</feature>
<feature type="binding site" evidence="1">
    <location>
        <position position="950"/>
    </location>
    <ligand>
        <name>Zn(2+)</name>
        <dbReference type="ChEBI" id="CHEBI:29105"/>
        <label>2</label>
    </ligand>
</feature>
<feature type="binding site" evidence="1">
    <location>
        <position position="953"/>
    </location>
    <ligand>
        <name>Zn(2+)</name>
        <dbReference type="ChEBI" id="CHEBI:29105"/>
        <label>2</label>
    </ligand>
</feature>
<name>RPOC_CHLL2</name>
<comment type="function">
    <text evidence="1">DNA-dependent RNA polymerase catalyzes the transcription of DNA into RNA using the four ribonucleoside triphosphates as substrates.</text>
</comment>
<comment type="catalytic activity">
    <reaction evidence="1">
        <text>RNA(n) + a ribonucleoside 5'-triphosphate = RNA(n+1) + diphosphate</text>
        <dbReference type="Rhea" id="RHEA:21248"/>
        <dbReference type="Rhea" id="RHEA-COMP:14527"/>
        <dbReference type="Rhea" id="RHEA-COMP:17342"/>
        <dbReference type="ChEBI" id="CHEBI:33019"/>
        <dbReference type="ChEBI" id="CHEBI:61557"/>
        <dbReference type="ChEBI" id="CHEBI:140395"/>
        <dbReference type="EC" id="2.7.7.6"/>
    </reaction>
</comment>
<comment type="cofactor">
    <cofactor evidence="1">
        <name>Mg(2+)</name>
        <dbReference type="ChEBI" id="CHEBI:18420"/>
    </cofactor>
    <text evidence="1">Binds 1 Mg(2+) ion per subunit.</text>
</comment>
<comment type="cofactor">
    <cofactor evidence="1">
        <name>Zn(2+)</name>
        <dbReference type="ChEBI" id="CHEBI:29105"/>
    </cofactor>
    <text evidence="1">Binds 2 Zn(2+) ions per subunit.</text>
</comment>
<comment type="subunit">
    <text evidence="1">The RNAP catalytic core consists of 2 alpha, 1 beta, 1 beta' and 1 omega subunit. When a sigma factor is associated with the core the holoenzyme is formed, which can initiate transcription.</text>
</comment>
<comment type="similarity">
    <text evidence="1">Belongs to the RNA polymerase beta' chain family.</text>
</comment>
<evidence type="ECO:0000255" key="1">
    <source>
        <dbReference type="HAMAP-Rule" id="MF_01322"/>
    </source>
</evidence>
<organism>
    <name type="scientific">Chlorobium limicola (strain DSM 245 / NBRC 103803 / 6330)</name>
    <dbReference type="NCBI Taxonomy" id="290315"/>
    <lineage>
        <taxon>Bacteria</taxon>
        <taxon>Pseudomonadati</taxon>
        <taxon>Chlorobiota</taxon>
        <taxon>Chlorobiia</taxon>
        <taxon>Chlorobiales</taxon>
        <taxon>Chlorobiaceae</taxon>
        <taxon>Chlorobium/Pelodictyon group</taxon>
        <taxon>Chlorobium</taxon>
    </lineage>
</organism>
<gene>
    <name evidence="1" type="primary">rpoC</name>
    <name type="ordered locus">Clim_0197</name>
</gene>
<keyword id="KW-0240">DNA-directed RNA polymerase</keyword>
<keyword id="KW-0460">Magnesium</keyword>
<keyword id="KW-0479">Metal-binding</keyword>
<keyword id="KW-0548">Nucleotidyltransferase</keyword>
<keyword id="KW-0804">Transcription</keyword>
<keyword id="KW-0808">Transferase</keyword>
<keyword id="KW-0862">Zinc</keyword>